<feature type="chain" id="PRO_0000385762" description="GTPase Obg">
    <location>
        <begin position="1"/>
        <end position="356"/>
    </location>
</feature>
<feature type="domain" description="Obg" evidence="2">
    <location>
        <begin position="1"/>
        <end position="159"/>
    </location>
</feature>
<feature type="domain" description="OBG-type G" evidence="1">
    <location>
        <begin position="160"/>
        <end position="327"/>
    </location>
</feature>
<feature type="region of interest" description="Disordered" evidence="3">
    <location>
        <begin position="332"/>
        <end position="356"/>
    </location>
</feature>
<feature type="binding site" evidence="1">
    <location>
        <begin position="166"/>
        <end position="173"/>
    </location>
    <ligand>
        <name>GTP</name>
        <dbReference type="ChEBI" id="CHEBI:37565"/>
    </ligand>
</feature>
<feature type="binding site" evidence="1">
    <location>
        <position position="173"/>
    </location>
    <ligand>
        <name>Mg(2+)</name>
        <dbReference type="ChEBI" id="CHEBI:18420"/>
    </ligand>
</feature>
<feature type="binding site" evidence="1">
    <location>
        <begin position="191"/>
        <end position="195"/>
    </location>
    <ligand>
        <name>GTP</name>
        <dbReference type="ChEBI" id="CHEBI:37565"/>
    </ligand>
</feature>
<feature type="binding site" evidence="1">
    <location>
        <position position="193"/>
    </location>
    <ligand>
        <name>Mg(2+)</name>
        <dbReference type="ChEBI" id="CHEBI:18420"/>
    </ligand>
</feature>
<feature type="binding site" evidence="1">
    <location>
        <begin position="212"/>
        <end position="215"/>
    </location>
    <ligand>
        <name>GTP</name>
        <dbReference type="ChEBI" id="CHEBI:37565"/>
    </ligand>
</feature>
<feature type="binding site" evidence="1">
    <location>
        <begin position="279"/>
        <end position="282"/>
    </location>
    <ligand>
        <name>GTP</name>
        <dbReference type="ChEBI" id="CHEBI:37565"/>
    </ligand>
</feature>
<feature type="binding site" evidence="1">
    <location>
        <begin position="308"/>
        <end position="310"/>
    </location>
    <ligand>
        <name>GTP</name>
        <dbReference type="ChEBI" id="CHEBI:37565"/>
    </ligand>
</feature>
<accession>A5E965</accession>
<sequence>MKFLDEAKVYVRSGDGGNGCVAFRREKFIEFGGPNGGNGGRGGDVVIEAVDGLNTLIDYRYQQHFKAQRGGNGSGKDCHGAGGKSVVLKVPVGTQIFDEDRETLIHDFTTVGERFVLAQGGNGGFGNAHFKSPTNRAPRHANPGQPGEERWIWLRMKLIADAGLVGLPNAGKSTFLSKVSAAKPKIADYPFTTLHPQLGVVNADGREFVLADIPGLIEGAHEGAGLGDRFLGHVERCRVLLHLVDATCEHAGKAYKTVRHELEAYGGDLTDKVEIVALNKIDAVDPDELKKQKDRLKRAAKKTPLLISGATGEGVKEALRKLADVISEQPVSIKAKSTSDSAATEEPWAAPLPPQG</sequence>
<reference key="1">
    <citation type="journal article" date="2007" name="Science">
        <title>Legumes symbioses: absence of nod genes in photosynthetic bradyrhizobia.</title>
        <authorList>
            <person name="Giraud E."/>
            <person name="Moulin L."/>
            <person name="Vallenet D."/>
            <person name="Barbe V."/>
            <person name="Cytryn E."/>
            <person name="Avarre J.-C."/>
            <person name="Jaubert M."/>
            <person name="Simon D."/>
            <person name="Cartieaux F."/>
            <person name="Prin Y."/>
            <person name="Bena G."/>
            <person name="Hannibal L."/>
            <person name="Fardoux J."/>
            <person name="Kojadinovic M."/>
            <person name="Vuillet L."/>
            <person name="Lajus A."/>
            <person name="Cruveiller S."/>
            <person name="Rouy Z."/>
            <person name="Mangenot S."/>
            <person name="Segurens B."/>
            <person name="Dossat C."/>
            <person name="Franck W.L."/>
            <person name="Chang W.-S."/>
            <person name="Saunders E."/>
            <person name="Bruce D."/>
            <person name="Richardson P."/>
            <person name="Normand P."/>
            <person name="Dreyfus B."/>
            <person name="Pignol D."/>
            <person name="Stacey G."/>
            <person name="Emerich D."/>
            <person name="Vermeglio A."/>
            <person name="Medigue C."/>
            <person name="Sadowsky M."/>
        </authorList>
    </citation>
    <scope>NUCLEOTIDE SEQUENCE [LARGE SCALE GENOMIC DNA]</scope>
    <source>
        <strain>BTAi1 / ATCC BAA-1182</strain>
    </source>
</reference>
<organism>
    <name type="scientific">Bradyrhizobium sp. (strain BTAi1 / ATCC BAA-1182)</name>
    <dbReference type="NCBI Taxonomy" id="288000"/>
    <lineage>
        <taxon>Bacteria</taxon>
        <taxon>Pseudomonadati</taxon>
        <taxon>Pseudomonadota</taxon>
        <taxon>Alphaproteobacteria</taxon>
        <taxon>Hyphomicrobiales</taxon>
        <taxon>Nitrobacteraceae</taxon>
        <taxon>Bradyrhizobium</taxon>
    </lineage>
</organism>
<keyword id="KW-0963">Cytoplasm</keyword>
<keyword id="KW-0342">GTP-binding</keyword>
<keyword id="KW-0378">Hydrolase</keyword>
<keyword id="KW-0460">Magnesium</keyword>
<keyword id="KW-0479">Metal-binding</keyword>
<keyword id="KW-0547">Nucleotide-binding</keyword>
<keyword id="KW-1185">Reference proteome</keyword>
<protein>
    <recommendedName>
        <fullName evidence="1">GTPase Obg</fullName>
        <ecNumber evidence="1">3.6.5.-</ecNumber>
    </recommendedName>
    <alternativeName>
        <fullName evidence="1">GTP-binding protein Obg</fullName>
    </alternativeName>
</protein>
<gene>
    <name evidence="1" type="primary">obg</name>
    <name type="ordered locus">BBta_0423</name>
</gene>
<dbReference type="EC" id="3.6.5.-" evidence="1"/>
<dbReference type="EMBL" id="CP000494">
    <property type="protein sequence ID" value="ABQ32709.1"/>
    <property type="molecule type" value="Genomic_DNA"/>
</dbReference>
<dbReference type="RefSeq" id="WP_012040762.1">
    <property type="nucleotide sequence ID" value="NC_009485.1"/>
</dbReference>
<dbReference type="SMR" id="A5E965"/>
<dbReference type="STRING" id="288000.BBta_0423"/>
<dbReference type="KEGG" id="bbt:BBta_0423"/>
<dbReference type="eggNOG" id="COG0536">
    <property type="taxonomic scope" value="Bacteria"/>
</dbReference>
<dbReference type="HOGENOM" id="CLU_011747_2_0_5"/>
<dbReference type="OrthoDB" id="9807318at2"/>
<dbReference type="Proteomes" id="UP000000246">
    <property type="component" value="Chromosome"/>
</dbReference>
<dbReference type="GO" id="GO:0005737">
    <property type="term" value="C:cytoplasm"/>
    <property type="evidence" value="ECO:0007669"/>
    <property type="project" value="UniProtKB-SubCell"/>
</dbReference>
<dbReference type="GO" id="GO:0005525">
    <property type="term" value="F:GTP binding"/>
    <property type="evidence" value="ECO:0007669"/>
    <property type="project" value="UniProtKB-UniRule"/>
</dbReference>
<dbReference type="GO" id="GO:0003924">
    <property type="term" value="F:GTPase activity"/>
    <property type="evidence" value="ECO:0007669"/>
    <property type="project" value="UniProtKB-UniRule"/>
</dbReference>
<dbReference type="GO" id="GO:0000287">
    <property type="term" value="F:magnesium ion binding"/>
    <property type="evidence" value="ECO:0007669"/>
    <property type="project" value="InterPro"/>
</dbReference>
<dbReference type="GO" id="GO:0042254">
    <property type="term" value="P:ribosome biogenesis"/>
    <property type="evidence" value="ECO:0007669"/>
    <property type="project" value="UniProtKB-UniRule"/>
</dbReference>
<dbReference type="CDD" id="cd01898">
    <property type="entry name" value="Obg"/>
    <property type="match status" value="1"/>
</dbReference>
<dbReference type="FunFam" id="2.70.210.12:FF:000001">
    <property type="entry name" value="GTPase Obg"/>
    <property type="match status" value="1"/>
</dbReference>
<dbReference type="Gene3D" id="2.70.210.12">
    <property type="entry name" value="GTP1/OBG domain"/>
    <property type="match status" value="1"/>
</dbReference>
<dbReference type="Gene3D" id="3.40.50.300">
    <property type="entry name" value="P-loop containing nucleotide triphosphate hydrolases"/>
    <property type="match status" value="1"/>
</dbReference>
<dbReference type="HAMAP" id="MF_01454">
    <property type="entry name" value="GTPase_Obg"/>
    <property type="match status" value="1"/>
</dbReference>
<dbReference type="InterPro" id="IPR031167">
    <property type="entry name" value="G_OBG"/>
</dbReference>
<dbReference type="InterPro" id="IPR006073">
    <property type="entry name" value="GTP-bd"/>
</dbReference>
<dbReference type="InterPro" id="IPR014100">
    <property type="entry name" value="GTP-bd_Obg/CgtA"/>
</dbReference>
<dbReference type="InterPro" id="IPR006074">
    <property type="entry name" value="GTP1-OBG_CS"/>
</dbReference>
<dbReference type="InterPro" id="IPR006169">
    <property type="entry name" value="GTP1_OBG_dom"/>
</dbReference>
<dbReference type="InterPro" id="IPR036726">
    <property type="entry name" value="GTP1_OBG_dom_sf"/>
</dbReference>
<dbReference type="InterPro" id="IPR045086">
    <property type="entry name" value="OBG_GTPase"/>
</dbReference>
<dbReference type="InterPro" id="IPR027417">
    <property type="entry name" value="P-loop_NTPase"/>
</dbReference>
<dbReference type="InterPro" id="IPR005225">
    <property type="entry name" value="Small_GTP-bd"/>
</dbReference>
<dbReference type="NCBIfam" id="TIGR02729">
    <property type="entry name" value="Obg_CgtA"/>
    <property type="match status" value="1"/>
</dbReference>
<dbReference type="NCBIfam" id="NF008955">
    <property type="entry name" value="PRK12297.1"/>
    <property type="match status" value="1"/>
</dbReference>
<dbReference type="NCBIfam" id="NF008956">
    <property type="entry name" value="PRK12299.1"/>
    <property type="match status" value="1"/>
</dbReference>
<dbReference type="NCBIfam" id="TIGR00231">
    <property type="entry name" value="small_GTP"/>
    <property type="match status" value="1"/>
</dbReference>
<dbReference type="PANTHER" id="PTHR11702">
    <property type="entry name" value="DEVELOPMENTALLY REGULATED GTP-BINDING PROTEIN-RELATED"/>
    <property type="match status" value="1"/>
</dbReference>
<dbReference type="PANTHER" id="PTHR11702:SF31">
    <property type="entry name" value="MITOCHONDRIAL RIBOSOME-ASSOCIATED GTPASE 2"/>
    <property type="match status" value="1"/>
</dbReference>
<dbReference type="Pfam" id="PF01018">
    <property type="entry name" value="GTP1_OBG"/>
    <property type="match status" value="1"/>
</dbReference>
<dbReference type="Pfam" id="PF01926">
    <property type="entry name" value="MMR_HSR1"/>
    <property type="match status" value="1"/>
</dbReference>
<dbReference type="PIRSF" id="PIRSF002401">
    <property type="entry name" value="GTP_bd_Obg/CgtA"/>
    <property type="match status" value="1"/>
</dbReference>
<dbReference type="PRINTS" id="PR00326">
    <property type="entry name" value="GTP1OBG"/>
</dbReference>
<dbReference type="SUPFAM" id="SSF82051">
    <property type="entry name" value="Obg GTP-binding protein N-terminal domain"/>
    <property type="match status" value="1"/>
</dbReference>
<dbReference type="SUPFAM" id="SSF52540">
    <property type="entry name" value="P-loop containing nucleoside triphosphate hydrolases"/>
    <property type="match status" value="1"/>
</dbReference>
<dbReference type="PROSITE" id="PS51710">
    <property type="entry name" value="G_OBG"/>
    <property type="match status" value="1"/>
</dbReference>
<dbReference type="PROSITE" id="PS00905">
    <property type="entry name" value="GTP1_OBG"/>
    <property type="match status" value="1"/>
</dbReference>
<dbReference type="PROSITE" id="PS51883">
    <property type="entry name" value="OBG"/>
    <property type="match status" value="1"/>
</dbReference>
<proteinExistence type="inferred from homology"/>
<name>OBG_BRASB</name>
<evidence type="ECO:0000255" key="1">
    <source>
        <dbReference type="HAMAP-Rule" id="MF_01454"/>
    </source>
</evidence>
<evidence type="ECO:0000255" key="2">
    <source>
        <dbReference type="PROSITE-ProRule" id="PRU01231"/>
    </source>
</evidence>
<evidence type="ECO:0000256" key="3">
    <source>
        <dbReference type="SAM" id="MobiDB-lite"/>
    </source>
</evidence>
<comment type="function">
    <text evidence="1">An essential GTPase which binds GTP, GDP and possibly (p)ppGpp with moderate affinity, with high nucleotide exchange rates and a fairly low GTP hydrolysis rate. Plays a role in control of the cell cycle, stress response, ribosome biogenesis and in those bacteria that undergo differentiation, in morphogenesis control.</text>
</comment>
<comment type="cofactor">
    <cofactor evidence="1">
        <name>Mg(2+)</name>
        <dbReference type="ChEBI" id="CHEBI:18420"/>
    </cofactor>
</comment>
<comment type="subunit">
    <text evidence="1">Monomer.</text>
</comment>
<comment type="subcellular location">
    <subcellularLocation>
        <location evidence="1">Cytoplasm</location>
    </subcellularLocation>
</comment>
<comment type="similarity">
    <text evidence="1">Belongs to the TRAFAC class OBG-HflX-like GTPase superfamily. OBG GTPase family.</text>
</comment>